<evidence type="ECO:0000255" key="1">
    <source>
        <dbReference type="HAMAP-Rule" id="MF_00664"/>
    </source>
</evidence>
<comment type="function">
    <text evidence="1">Catalyzes the formation of phosphatidylethanolamine (PtdEtn) from phosphatidylserine (PtdSer).</text>
</comment>
<comment type="catalytic activity">
    <reaction evidence="1">
        <text>a 1,2-diacyl-sn-glycero-3-phospho-L-serine + H(+) = a 1,2-diacyl-sn-glycero-3-phosphoethanolamine + CO2</text>
        <dbReference type="Rhea" id="RHEA:20828"/>
        <dbReference type="ChEBI" id="CHEBI:15378"/>
        <dbReference type="ChEBI" id="CHEBI:16526"/>
        <dbReference type="ChEBI" id="CHEBI:57262"/>
        <dbReference type="ChEBI" id="CHEBI:64612"/>
        <dbReference type="EC" id="4.1.1.65"/>
    </reaction>
</comment>
<comment type="cofactor">
    <cofactor evidence="1">
        <name>pyruvate</name>
        <dbReference type="ChEBI" id="CHEBI:15361"/>
    </cofactor>
    <text evidence="1">Binds 1 pyruvoyl group covalently per subunit.</text>
</comment>
<comment type="pathway">
    <text evidence="1">Phospholipid metabolism; phosphatidylethanolamine biosynthesis; phosphatidylethanolamine from CDP-diacylglycerol: step 2/2.</text>
</comment>
<comment type="subunit">
    <text evidence="1">Heterodimer of a large membrane-associated beta subunit and a small pyruvoyl-containing alpha subunit.</text>
</comment>
<comment type="subcellular location">
    <subcellularLocation>
        <location evidence="1">Cell membrane</location>
        <topology evidence="1">Peripheral membrane protein</topology>
    </subcellularLocation>
</comment>
<comment type="PTM">
    <text evidence="1">Is synthesized initially as an inactive proenzyme. Formation of the active enzyme involves a self-maturation process in which the active site pyruvoyl group is generated from an internal serine residue via an autocatalytic post-translational modification. Two non-identical subunits are generated from the proenzyme in this reaction, and the pyruvate is formed at the N-terminus of the alpha chain, which is derived from the carboxyl end of the proenzyme. The post-translation cleavage follows an unusual pathway, termed non-hydrolytic serinolysis, in which the side chain hydroxyl group of the serine supplies its oxygen atom to form the C-terminus of the beta chain, while the remainder of the serine residue undergoes an oxidative deamination to produce ammonia and the pyruvoyl prosthetic group on the alpha chain.</text>
</comment>
<comment type="similarity">
    <text evidence="1">Belongs to the phosphatidylserine decarboxylase family. PSD-A subfamily.</text>
</comment>
<gene>
    <name evidence="1" type="primary">psd</name>
    <name type="ordered locus">BAbS19_I04340</name>
</gene>
<proteinExistence type="inferred from homology"/>
<accession>B2S9U3</accession>
<dbReference type="EC" id="4.1.1.65" evidence="1"/>
<dbReference type="EMBL" id="CP000887">
    <property type="protein sequence ID" value="ACD71973.1"/>
    <property type="molecule type" value="Genomic_DNA"/>
</dbReference>
<dbReference type="KEGG" id="bmc:BAbS19_I04340"/>
<dbReference type="HOGENOM" id="CLU_072492_0_0_5"/>
<dbReference type="UniPathway" id="UPA00558">
    <property type="reaction ID" value="UER00616"/>
</dbReference>
<dbReference type="Proteomes" id="UP000002565">
    <property type="component" value="Chromosome 1"/>
</dbReference>
<dbReference type="GO" id="GO:0005886">
    <property type="term" value="C:plasma membrane"/>
    <property type="evidence" value="ECO:0007669"/>
    <property type="project" value="UniProtKB-SubCell"/>
</dbReference>
<dbReference type="GO" id="GO:0004609">
    <property type="term" value="F:phosphatidylserine decarboxylase activity"/>
    <property type="evidence" value="ECO:0007669"/>
    <property type="project" value="UniProtKB-UniRule"/>
</dbReference>
<dbReference type="GO" id="GO:0006646">
    <property type="term" value="P:phosphatidylethanolamine biosynthetic process"/>
    <property type="evidence" value="ECO:0007669"/>
    <property type="project" value="UniProtKB-UniRule"/>
</dbReference>
<dbReference type="HAMAP" id="MF_00664">
    <property type="entry name" value="PS_decarb_PSD_A"/>
    <property type="match status" value="1"/>
</dbReference>
<dbReference type="InterPro" id="IPR003817">
    <property type="entry name" value="PS_Dcarbxylase"/>
</dbReference>
<dbReference type="InterPro" id="IPR033175">
    <property type="entry name" value="PSD-A"/>
</dbReference>
<dbReference type="NCBIfam" id="NF003677">
    <property type="entry name" value="PRK05305.1-1"/>
    <property type="match status" value="1"/>
</dbReference>
<dbReference type="NCBIfam" id="NF003678">
    <property type="entry name" value="PRK05305.1-2"/>
    <property type="match status" value="1"/>
</dbReference>
<dbReference type="NCBIfam" id="NF003679">
    <property type="entry name" value="PRK05305.1-3"/>
    <property type="match status" value="1"/>
</dbReference>
<dbReference type="NCBIfam" id="NF003685">
    <property type="entry name" value="PRK05305.2-5"/>
    <property type="match status" value="1"/>
</dbReference>
<dbReference type="PANTHER" id="PTHR35809">
    <property type="entry name" value="ARCHAETIDYLSERINE DECARBOXYLASE PROENZYME-RELATED"/>
    <property type="match status" value="1"/>
</dbReference>
<dbReference type="PANTHER" id="PTHR35809:SF1">
    <property type="entry name" value="ARCHAETIDYLSERINE DECARBOXYLASE PROENZYME-RELATED"/>
    <property type="match status" value="1"/>
</dbReference>
<dbReference type="Pfam" id="PF02666">
    <property type="entry name" value="PS_Dcarbxylase"/>
    <property type="match status" value="1"/>
</dbReference>
<feature type="chain" id="PRO_1000131442" description="Phosphatidylserine decarboxylase beta chain" evidence="1">
    <location>
        <begin position="1"/>
        <end position="189"/>
    </location>
</feature>
<feature type="chain" id="PRO_1000131443" description="Phosphatidylserine decarboxylase alpha chain" evidence="1">
    <location>
        <begin position="190"/>
        <end position="232"/>
    </location>
</feature>
<feature type="active site" description="Schiff-base intermediate with substrate; via pyruvic acid" evidence="1">
    <location>
        <position position="190"/>
    </location>
</feature>
<feature type="site" description="Cleavage (non-hydrolytic); by autocatalysis" evidence="1">
    <location>
        <begin position="189"/>
        <end position="190"/>
    </location>
</feature>
<feature type="modified residue" description="Pyruvic acid (Ser); by autocatalysis" evidence="1">
    <location>
        <position position="190"/>
    </location>
</feature>
<protein>
    <recommendedName>
        <fullName evidence="1">Phosphatidylserine decarboxylase proenzyme</fullName>
        <ecNumber evidence="1">4.1.1.65</ecNumber>
    </recommendedName>
    <component>
        <recommendedName>
            <fullName evidence="1">Phosphatidylserine decarboxylase alpha chain</fullName>
        </recommendedName>
    </component>
    <component>
        <recommendedName>
            <fullName evidence="1">Phosphatidylserine decarboxylase beta chain</fullName>
        </recommendedName>
    </component>
</protein>
<keyword id="KW-1003">Cell membrane</keyword>
<keyword id="KW-0210">Decarboxylase</keyword>
<keyword id="KW-0444">Lipid biosynthesis</keyword>
<keyword id="KW-0443">Lipid metabolism</keyword>
<keyword id="KW-0456">Lyase</keyword>
<keyword id="KW-0472">Membrane</keyword>
<keyword id="KW-0594">Phospholipid biosynthesis</keyword>
<keyword id="KW-1208">Phospholipid metabolism</keyword>
<keyword id="KW-0670">Pyruvate</keyword>
<keyword id="KW-0865">Zymogen</keyword>
<organism>
    <name type="scientific">Brucella abortus (strain S19)</name>
    <dbReference type="NCBI Taxonomy" id="430066"/>
    <lineage>
        <taxon>Bacteria</taxon>
        <taxon>Pseudomonadati</taxon>
        <taxon>Pseudomonadota</taxon>
        <taxon>Alphaproteobacteria</taxon>
        <taxon>Hyphomicrobiales</taxon>
        <taxon>Brucellaceae</taxon>
        <taxon>Brucella/Ochrobactrum group</taxon>
        <taxon>Brucella</taxon>
    </lineage>
</organism>
<sequence length="232" mass="25808">MSLTDTIRNTFVPIHREGYPFIAGFFVVSLILGWLWDPLFWIGMVLTVWCIYFYRDPERVTPMDDDLVISPADGKVSFVGLAVPPAELDLGYEPMTRVSVFMNVFSVHINRSPVRGKIDKVVHRPGKFLNAELDKASTENERNSVLIESPHGKIGVVQIAGLVARRIVCWSNQDDELSVGERFGLIRFGSRVDVYLPSDATVRVAVGQTAIAGETVLADYGTERGEPVVRIA</sequence>
<reference key="1">
    <citation type="journal article" date="2008" name="PLoS ONE">
        <title>Genome sequence of Brucella abortus vaccine strain S19 compared to virulent strains yields candidate virulence genes.</title>
        <authorList>
            <person name="Crasta O.R."/>
            <person name="Folkerts O."/>
            <person name="Fei Z."/>
            <person name="Mane S.P."/>
            <person name="Evans C."/>
            <person name="Martino-Catt S."/>
            <person name="Bricker B."/>
            <person name="Yu G."/>
            <person name="Du L."/>
            <person name="Sobral B.W."/>
        </authorList>
    </citation>
    <scope>NUCLEOTIDE SEQUENCE [LARGE SCALE GENOMIC DNA]</scope>
    <source>
        <strain>S19</strain>
    </source>
</reference>
<name>PSD_BRUA1</name>